<proteinExistence type="inferred from homology"/>
<accession>Q081F9</accession>
<sequence>MTSLNPTSNGKKVIVGMSGGVDSSVSAYLLMQQGFEVEGLFMKNWEEDDTDEYCAAADDLKDAQAVCDKLGIKMHTVNFAAEYWDNVFEYFLAEYKAGRTPNPDIMCNKEIKFKAFLEFADDILDADYIAMGHYVRRRDNSDGSVEMLRGVDGNKDQSYFLYTLSHEQVARSLFPVGELEKHQVREIAQKLGLITHDKKDSTGICFIGERKFTDFLATYLPAQPGDIETSEGEVIGTHQGLMYHTLGQRKGLGIGGLKNSNEDPWYVVEKDLVRNVLIVAQGGNHPRLMSTGMTVNQLHWVDRTGPANNSTITVKTRYRQRDVGCTLTYDDADNITVMFDEPVAAVTPGQSAVFYDGDICLGGGIIDTLIRG</sequence>
<dbReference type="EC" id="2.8.1.13" evidence="1"/>
<dbReference type="EMBL" id="CP000447">
    <property type="protein sequence ID" value="ABI72106.1"/>
    <property type="molecule type" value="Genomic_DNA"/>
</dbReference>
<dbReference type="RefSeq" id="WP_011637715.1">
    <property type="nucleotide sequence ID" value="NC_008345.1"/>
</dbReference>
<dbReference type="SMR" id="Q081F9"/>
<dbReference type="STRING" id="318167.Sfri_2260"/>
<dbReference type="KEGG" id="sfr:Sfri_2260"/>
<dbReference type="eggNOG" id="COG0482">
    <property type="taxonomic scope" value="Bacteria"/>
</dbReference>
<dbReference type="HOGENOM" id="CLU_035188_1_0_6"/>
<dbReference type="OrthoDB" id="9800696at2"/>
<dbReference type="Proteomes" id="UP000000684">
    <property type="component" value="Chromosome"/>
</dbReference>
<dbReference type="GO" id="GO:0005737">
    <property type="term" value="C:cytoplasm"/>
    <property type="evidence" value="ECO:0007669"/>
    <property type="project" value="UniProtKB-SubCell"/>
</dbReference>
<dbReference type="GO" id="GO:0005524">
    <property type="term" value="F:ATP binding"/>
    <property type="evidence" value="ECO:0007669"/>
    <property type="project" value="UniProtKB-KW"/>
</dbReference>
<dbReference type="GO" id="GO:0000049">
    <property type="term" value="F:tRNA binding"/>
    <property type="evidence" value="ECO:0007669"/>
    <property type="project" value="UniProtKB-KW"/>
</dbReference>
<dbReference type="GO" id="GO:0103016">
    <property type="term" value="F:tRNA-uridine 2-sulfurtransferase activity"/>
    <property type="evidence" value="ECO:0007669"/>
    <property type="project" value="UniProtKB-EC"/>
</dbReference>
<dbReference type="GO" id="GO:0002143">
    <property type="term" value="P:tRNA wobble position uridine thiolation"/>
    <property type="evidence" value="ECO:0007669"/>
    <property type="project" value="TreeGrafter"/>
</dbReference>
<dbReference type="CDD" id="cd01998">
    <property type="entry name" value="MnmA_TRMU-like"/>
    <property type="match status" value="1"/>
</dbReference>
<dbReference type="FunFam" id="2.30.30.280:FF:000001">
    <property type="entry name" value="tRNA-specific 2-thiouridylase MnmA"/>
    <property type="match status" value="1"/>
</dbReference>
<dbReference type="FunFam" id="2.40.30.10:FF:000023">
    <property type="entry name" value="tRNA-specific 2-thiouridylase MnmA"/>
    <property type="match status" value="1"/>
</dbReference>
<dbReference type="FunFam" id="3.40.50.620:FF:000004">
    <property type="entry name" value="tRNA-specific 2-thiouridylase MnmA"/>
    <property type="match status" value="1"/>
</dbReference>
<dbReference type="Gene3D" id="2.30.30.280">
    <property type="entry name" value="Adenine nucleotide alpha hydrolases-like domains"/>
    <property type="match status" value="1"/>
</dbReference>
<dbReference type="Gene3D" id="3.40.50.620">
    <property type="entry name" value="HUPs"/>
    <property type="match status" value="1"/>
</dbReference>
<dbReference type="Gene3D" id="2.40.30.10">
    <property type="entry name" value="Translation factors"/>
    <property type="match status" value="1"/>
</dbReference>
<dbReference type="HAMAP" id="MF_00144">
    <property type="entry name" value="tRNA_thiouridyl_MnmA"/>
    <property type="match status" value="1"/>
</dbReference>
<dbReference type="InterPro" id="IPR004506">
    <property type="entry name" value="MnmA-like"/>
</dbReference>
<dbReference type="InterPro" id="IPR046885">
    <property type="entry name" value="MnmA-like_C"/>
</dbReference>
<dbReference type="InterPro" id="IPR046884">
    <property type="entry name" value="MnmA-like_central"/>
</dbReference>
<dbReference type="InterPro" id="IPR023382">
    <property type="entry name" value="MnmA-like_central_sf"/>
</dbReference>
<dbReference type="InterPro" id="IPR014729">
    <property type="entry name" value="Rossmann-like_a/b/a_fold"/>
</dbReference>
<dbReference type="NCBIfam" id="NF001138">
    <property type="entry name" value="PRK00143.1"/>
    <property type="match status" value="1"/>
</dbReference>
<dbReference type="NCBIfam" id="TIGR00420">
    <property type="entry name" value="trmU"/>
    <property type="match status" value="1"/>
</dbReference>
<dbReference type="PANTHER" id="PTHR11933:SF5">
    <property type="entry name" value="MITOCHONDRIAL TRNA-SPECIFIC 2-THIOURIDYLASE 1"/>
    <property type="match status" value="1"/>
</dbReference>
<dbReference type="PANTHER" id="PTHR11933">
    <property type="entry name" value="TRNA 5-METHYLAMINOMETHYL-2-THIOURIDYLATE -METHYLTRANSFERASE"/>
    <property type="match status" value="1"/>
</dbReference>
<dbReference type="Pfam" id="PF03054">
    <property type="entry name" value="tRNA_Me_trans"/>
    <property type="match status" value="1"/>
</dbReference>
<dbReference type="Pfam" id="PF20258">
    <property type="entry name" value="tRNA_Me_trans_C"/>
    <property type="match status" value="1"/>
</dbReference>
<dbReference type="Pfam" id="PF20259">
    <property type="entry name" value="tRNA_Me_trans_M"/>
    <property type="match status" value="1"/>
</dbReference>
<dbReference type="SUPFAM" id="SSF52402">
    <property type="entry name" value="Adenine nucleotide alpha hydrolases-like"/>
    <property type="match status" value="1"/>
</dbReference>
<keyword id="KW-0067">ATP-binding</keyword>
<keyword id="KW-0963">Cytoplasm</keyword>
<keyword id="KW-1015">Disulfide bond</keyword>
<keyword id="KW-0547">Nucleotide-binding</keyword>
<keyword id="KW-1185">Reference proteome</keyword>
<keyword id="KW-0694">RNA-binding</keyword>
<keyword id="KW-0808">Transferase</keyword>
<keyword id="KW-0819">tRNA processing</keyword>
<keyword id="KW-0820">tRNA-binding</keyword>
<protein>
    <recommendedName>
        <fullName evidence="1">tRNA-specific 2-thiouridylase MnmA</fullName>
        <ecNumber evidence="1">2.8.1.13</ecNumber>
    </recommendedName>
</protein>
<evidence type="ECO:0000255" key="1">
    <source>
        <dbReference type="HAMAP-Rule" id="MF_00144"/>
    </source>
</evidence>
<reference key="1">
    <citation type="submission" date="2006-08" db="EMBL/GenBank/DDBJ databases">
        <title>Complete sequence of Shewanella frigidimarina NCIMB 400.</title>
        <authorList>
            <consortium name="US DOE Joint Genome Institute"/>
            <person name="Copeland A."/>
            <person name="Lucas S."/>
            <person name="Lapidus A."/>
            <person name="Barry K."/>
            <person name="Detter J.C."/>
            <person name="Glavina del Rio T."/>
            <person name="Hammon N."/>
            <person name="Israni S."/>
            <person name="Dalin E."/>
            <person name="Tice H."/>
            <person name="Pitluck S."/>
            <person name="Fredrickson J.K."/>
            <person name="Kolker E."/>
            <person name="McCuel L.A."/>
            <person name="DiChristina T."/>
            <person name="Nealson K.H."/>
            <person name="Newman D."/>
            <person name="Tiedje J.M."/>
            <person name="Zhou J."/>
            <person name="Romine M.F."/>
            <person name="Culley D.E."/>
            <person name="Serres M."/>
            <person name="Chertkov O."/>
            <person name="Brettin T."/>
            <person name="Bruce D."/>
            <person name="Han C."/>
            <person name="Tapia R."/>
            <person name="Gilna P."/>
            <person name="Schmutz J."/>
            <person name="Larimer F."/>
            <person name="Land M."/>
            <person name="Hauser L."/>
            <person name="Kyrpides N."/>
            <person name="Mikhailova N."/>
            <person name="Richardson P."/>
        </authorList>
    </citation>
    <scope>NUCLEOTIDE SEQUENCE [LARGE SCALE GENOMIC DNA]</scope>
    <source>
        <strain>NCIMB 400</strain>
    </source>
</reference>
<organism>
    <name type="scientific">Shewanella frigidimarina (strain NCIMB 400)</name>
    <dbReference type="NCBI Taxonomy" id="318167"/>
    <lineage>
        <taxon>Bacteria</taxon>
        <taxon>Pseudomonadati</taxon>
        <taxon>Pseudomonadota</taxon>
        <taxon>Gammaproteobacteria</taxon>
        <taxon>Alteromonadales</taxon>
        <taxon>Shewanellaceae</taxon>
        <taxon>Shewanella</taxon>
    </lineage>
</organism>
<comment type="function">
    <text evidence="1">Catalyzes the 2-thiolation of uridine at the wobble position (U34) of tRNA, leading to the formation of s(2)U34.</text>
</comment>
<comment type="catalytic activity">
    <reaction evidence="1">
        <text>S-sulfanyl-L-cysteinyl-[protein] + uridine(34) in tRNA + AH2 + ATP = 2-thiouridine(34) in tRNA + L-cysteinyl-[protein] + A + AMP + diphosphate + H(+)</text>
        <dbReference type="Rhea" id="RHEA:47032"/>
        <dbReference type="Rhea" id="RHEA-COMP:10131"/>
        <dbReference type="Rhea" id="RHEA-COMP:11726"/>
        <dbReference type="Rhea" id="RHEA-COMP:11727"/>
        <dbReference type="Rhea" id="RHEA-COMP:11728"/>
        <dbReference type="ChEBI" id="CHEBI:13193"/>
        <dbReference type="ChEBI" id="CHEBI:15378"/>
        <dbReference type="ChEBI" id="CHEBI:17499"/>
        <dbReference type="ChEBI" id="CHEBI:29950"/>
        <dbReference type="ChEBI" id="CHEBI:30616"/>
        <dbReference type="ChEBI" id="CHEBI:33019"/>
        <dbReference type="ChEBI" id="CHEBI:61963"/>
        <dbReference type="ChEBI" id="CHEBI:65315"/>
        <dbReference type="ChEBI" id="CHEBI:87170"/>
        <dbReference type="ChEBI" id="CHEBI:456215"/>
        <dbReference type="EC" id="2.8.1.13"/>
    </reaction>
</comment>
<comment type="subcellular location">
    <subcellularLocation>
        <location evidence="1">Cytoplasm</location>
    </subcellularLocation>
</comment>
<comment type="similarity">
    <text evidence="1">Belongs to the MnmA/TRMU family.</text>
</comment>
<feature type="chain" id="PRO_1000009570" description="tRNA-specific 2-thiouridylase MnmA">
    <location>
        <begin position="1"/>
        <end position="372"/>
    </location>
</feature>
<feature type="region of interest" description="Interaction with target base in tRNA" evidence="1">
    <location>
        <begin position="102"/>
        <end position="104"/>
    </location>
</feature>
<feature type="region of interest" description="Interaction with tRNA" evidence="1">
    <location>
        <begin position="155"/>
        <end position="157"/>
    </location>
</feature>
<feature type="region of interest" description="Interaction with tRNA" evidence="1">
    <location>
        <begin position="317"/>
        <end position="318"/>
    </location>
</feature>
<feature type="active site" description="Nucleophile" evidence="1">
    <location>
        <position position="107"/>
    </location>
</feature>
<feature type="active site" description="Cysteine persulfide intermediate" evidence="1">
    <location>
        <position position="205"/>
    </location>
</feature>
<feature type="binding site" evidence="1">
    <location>
        <begin position="16"/>
        <end position="23"/>
    </location>
    <ligand>
        <name>ATP</name>
        <dbReference type="ChEBI" id="CHEBI:30616"/>
    </ligand>
</feature>
<feature type="binding site" evidence="1">
    <location>
        <position position="42"/>
    </location>
    <ligand>
        <name>ATP</name>
        <dbReference type="ChEBI" id="CHEBI:30616"/>
    </ligand>
</feature>
<feature type="binding site" evidence="1">
    <location>
        <position position="132"/>
    </location>
    <ligand>
        <name>ATP</name>
        <dbReference type="ChEBI" id="CHEBI:30616"/>
    </ligand>
</feature>
<feature type="site" description="Interaction with tRNA" evidence="1">
    <location>
        <position position="133"/>
    </location>
</feature>
<feature type="site" description="Interaction with tRNA" evidence="1">
    <location>
        <position position="350"/>
    </location>
</feature>
<feature type="disulfide bond" description="Alternate" evidence="1">
    <location>
        <begin position="107"/>
        <end position="205"/>
    </location>
</feature>
<name>MNMA_SHEFN</name>
<gene>
    <name evidence="1" type="primary">mnmA</name>
    <name type="synonym">trmU</name>
    <name type="ordered locus">Sfri_2260</name>
</gene>